<organism>
    <name type="scientific">Mus musculus</name>
    <name type="common">Mouse</name>
    <dbReference type="NCBI Taxonomy" id="10090"/>
    <lineage>
        <taxon>Eukaryota</taxon>
        <taxon>Metazoa</taxon>
        <taxon>Chordata</taxon>
        <taxon>Craniata</taxon>
        <taxon>Vertebrata</taxon>
        <taxon>Euteleostomi</taxon>
        <taxon>Mammalia</taxon>
        <taxon>Eutheria</taxon>
        <taxon>Euarchontoglires</taxon>
        <taxon>Glires</taxon>
        <taxon>Rodentia</taxon>
        <taxon>Myomorpha</taxon>
        <taxon>Muroidea</taxon>
        <taxon>Muridae</taxon>
        <taxon>Murinae</taxon>
        <taxon>Mus</taxon>
        <taxon>Mus</taxon>
    </lineage>
</organism>
<feature type="chain" id="PRO_0000328949" description="7-methylguanosine phosphate-specific 5'-nucleotidase">
    <location>
        <begin position="1"/>
        <end position="300"/>
    </location>
</feature>
<feature type="active site" description="Nucleophile" evidence="4">
    <location>
        <position position="41"/>
    </location>
</feature>
<feature type="active site" description="Proton donor" evidence="4">
    <location>
        <position position="43"/>
    </location>
</feature>
<feature type="binding site" evidence="4">
    <location>
        <position position="41"/>
    </location>
    <ligand>
        <name>Mg(2+)</name>
        <dbReference type="ChEBI" id="CHEBI:18420"/>
    </ligand>
</feature>
<feature type="binding site" evidence="4">
    <location>
        <position position="43"/>
    </location>
    <ligand>
        <name>Mg(2+)</name>
        <dbReference type="ChEBI" id="CHEBI:18420"/>
    </ligand>
</feature>
<feature type="binding site" evidence="4">
    <location>
        <position position="88"/>
    </location>
    <ligand>
        <name>CMP</name>
        <dbReference type="ChEBI" id="CHEBI:60377"/>
    </ligand>
</feature>
<feature type="binding site" evidence="4">
    <location>
        <position position="88"/>
    </location>
    <ligand>
        <name>N(7)-methyl-GMP</name>
        <dbReference type="ChEBI" id="CHEBI:58285"/>
    </ligand>
</feature>
<feature type="binding site" evidence="3">
    <location>
        <begin position="156"/>
        <end position="157"/>
    </location>
    <ligand>
        <name>substrate</name>
    </ligand>
</feature>
<feature type="binding site" evidence="3">
    <location>
        <position position="205"/>
    </location>
    <ligand>
        <name>substrate</name>
    </ligand>
</feature>
<feature type="binding site" evidence="4">
    <location>
        <position position="230"/>
    </location>
    <ligand>
        <name>Mg(2+)</name>
        <dbReference type="ChEBI" id="CHEBI:18420"/>
    </ligand>
</feature>
<feature type="modified residue" description="N6-acetyllysine" evidence="2">
    <location>
        <position position="256"/>
    </location>
</feature>
<feature type="splice variant" id="VSP_046298" description="In isoform 4." evidence="5">
    <location>
        <begin position="1"/>
        <end position="8"/>
    </location>
</feature>
<feature type="splice variant" id="VSP_032851" description="In isoform 3." evidence="5">
    <original>LTELFHHYY</original>
    <variation>CGETCNPRG</variation>
    <location>
        <begin position="77"/>
        <end position="85"/>
    </location>
</feature>
<feature type="splice variant" id="VSP_032852" description="In isoform 3." evidence="5">
    <location>
        <begin position="86"/>
        <end position="300"/>
    </location>
</feature>
<feature type="splice variant" id="VSP_032853" description="In isoform 2." evidence="5">
    <original>VEERR</original>
    <variation>LPEAQ</variation>
    <location>
        <begin position="257"/>
        <end position="261"/>
    </location>
</feature>
<feature type="splice variant" id="VSP_032854" description="In isoform 2." evidence="5">
    <location>
        <begin position="262"/>
        <end position="300"/>
    </location>
</feature>
<feature type="sequence conflict" description="In Ref. 1; BAB24814." evidence="6" ref="1">
    <original>G</original>
    <variation>R</variation>
    <location>
        <position position="158"/>
    </location>
</feature>
<feature type="sequence conflict" description="In Ref. 1; BAB24814." evidence="6" ref="1">
    <original>D</original>
    <variation>H</variation>
    <location>
        <position position="185"/>
    </location>
</feature>
<feature type="sequence conflict" description="In Ref. 1; BAB24814." evidence="6" ref="1">
    <original>D</original>
    <variation>H</variation>
    <location>
        <position position="189"/>
    </location>
</feature>
<comment type="function">
    <text evidence="1">Specifically hydrolyzes 7-methylguanosine monophosphate (m(7)GMP) to 7-methylguanosine and inorganic phosphate. The specific activity for m(7)GMP may protect cells against undesired salvage of m(7)GMP and its incorporation into nucleic acids. Also has weak activity for CMP. UMP and purine nucleotides are poor substrates (By similarity).</text>
</comment>
<comment type="catalytic activity">
    <reaction evidence="4">
        <text>N(7)-methyl-GMP + H2O = N(7)-methylguanosine + phosphate</text>
        <dbReference type="Rhea" id="RHEA:37107"/>
        <dbReference type="ChEBI" id="CHEBI:15377"/>
        <dbReference type="ChEBI" id="CHEBI:20794"/>
        <dbReference type="ChEBI" id="CHEBI:43474"/>
        <dbReference type="ChEBI" id="CHEBI:58285"/>
        <dbReference type="EC" id="3.1.3.91"/>
    </reaction>
</comment>
<comment type="catalytic activity">
    <reaction evidence="4">
        <text>CMP + H2O = cytidine + phosphate</text>
        <dbReference type="Rhea" id="RHEA:29367"/>
        <dbReference type="ChEBI" id="CHEBI:15377"/>
        <dbReference type="ChEBI" id="CHEBI:17562"/>
        <dbReference type="ChEBI" id="CHEBI:43474"/>
        <dbReference type="ChEBI" id="CHEBI:60377"/>
        <dbReference type="EC" id="3.1.3.91"/>
    </reaction>
</comment>
<comment type="catalytic activity">
    <reaction evidence="4">
        <text>a ribonucleoside 5'-phosphate + H2O = a ribonucleoside + phosphate</text>
        <dbReference type="Rhea" id="RHEA:12484"/>
        <dbReference type="ChEBI" id="CHEBI:15377"/>
        <dbReference type="ChEBI" id="CHEBI:18254"/>
        <dbReference type="ChEBI" id="CHEBI:43474"/>
        <dbReference type="ChEBI" id="CHEBI:58043"/>
        <dbReference type="EC" id="3.1.3.5"/>
    </reaction>
</comment>
<comment type="subunit">
    <text evidence="1">Monomer.</text>
</comment>
<comment type="subcellular location">
    <subcellularLocation>
        <location evidence="6">Cytoplasm</location>
    </subcellularLocation>
</comment>
<comment type="alternative products">
    <event type="alternative splicing"/>
    <isoform>
        <id>Q3UFY7-1</id>
        <name>1</name>
        <sequence type="displayed"/>
    </isoform>
    <isoform>
        <id>Q3UFY7-2</id>
        <name>2</name>
        <sequence type="described" ref="VSP_032853 VSP_032854"/>
    </isoform>
    <isoform>
        <id>Q3UFY7-3</id>
        <name>3</name>
        <sequence type="described" ref="VSP_032851 VSP_032852"/>
    </isoform>
    <isoform>
        <id>Q3UFY7-4</id>
        <name>4</name>
        <sequence type="described" ref="VSP_046298"/>
    </isoform>
</comment>
<comment type="similarity">
    <text evidence="6">Belongs to the pyrimidine 5'-nucleotidase family.</text>
</comment>
<comment type="sequence caution" evidence="6">
    <conflict type="erroneous initiation">
        <sequence resource="EMBL-CDS" id="AAH15307"/>
    </conflict>
    <text>Truncated N-terminus.</text>
</comment>
<comment type="sequence caution" evidence="6">
    <conflict type="frameshift">
        <sequence resource="EMBL-CDS" id="BAB24814"/>
    </conflict>
</comment>
<comment type="sequence caution" evidence="6">
    <conflict type="erroneous initiation">
        <sequence resource="EMBL-CDS" id="BAC38632"/>
    </conflict>
    <text>Truncated N-terminus.</text>
</comment>
<comment type="sequence caution" evidence="6">
    <conflict type="erroneous initiation">
        <sequence resource="EMBL-CDS" id="BAE37053"/>
    </conflict>
    <text>Truncated N-terminus.</text>
</comment>
<comment type="sequence caution" evidence="6">
    <conflict type="erroneous gene model prediction">
        <sequence resource="EMBL-CDS" id="CAM23034"/>
    </conflict>
</comment>
<comment type="sequence caution" evidence="6">
    <conflict type="erroneous gene model prediction">
        <sequence resource="EMBL-CDS" id="CAM23036"/>
    </conflict>
</comment>
<accession>Q3UFY7</accession>
<accession>A2A4I2</accession>
<accession>A2A4I3</accession>
<accession>Q3TLP3</accession>
<accession>Q8BHU9</accession>
<accession>Q91WE8</accession>
<accession>Q9D9F9</accession>
<keyword id="KW-0007">Acetylation</keyword>
<keyword id="KW-0025">Alternative splicing</keyword>
<keyword id="KW-0963">Cytoplasm</keyword>
<keyword id="KW-0378">Hydrolase</keyword>
<keyword id="KW-0460">Magnesium</keyword>
<keyword id="KW-0479">Metal-binding</keyword>
<keyword id="KW-0546">Nucleotide metabolism</keyword>
<keyword id="KW-0547">Nucleotide-binding</keyword>
<keyword id="KW-1185">Reference proteome</keyword>
<proteinExistence type="evidence at protein level"/>
<gene>
    <name type="primary">Nt5c3b</name>
    <name type="synonym">Nt5c3l</name>
</gene>
<protein>
    <recommendedName>
        <fullName evidence="4">7-methylguanosine phosphate-specific 5'-nucleotidase</fullName>
        <shortName>7-methylguanosine nucleotidase</shortName>
        <ecNumber evidence="4">3.1.3.91</ecNumber>
    </recommendedName>
    <alternativeName>
        <fullName>Cytosolic 5'-nucleotidase 3B</fullName>
    </alternativeName>
    <alternativeName>
        <fullName evidence="4">Cytosolic 5'-nucleotidase III-like protein</fullName>
        <shortName>cN-III-like protein</shortName>
        <ecNumber evidence="4">3.1.3.5</ecNumber>
    </alternativeName>
    <alternativeName>
        <fullName>N(7)-methylguanylate 5'-phosphatase</fullName>
    </alternativeName>
</protein>
<sequence>MAEEVSSLMKATVLMRQPGRVQEIVGALRRGGGDRLQVISDFDMTLSRFAYNGQRCPSSHNILDNSKIISEDCRKELTELFHHYYPIEIDPHRTIKEKLPHMVQWWSKAHSLLCQQRIQKVQIAQVVGESTAMLREGYKTFFDTLYQNNIPLFIFSAGIGDILEEIIRQMKVFHPNIHIVSNYMDFSEDGFLKGFKGQLIHTYNKNSSVCENSSYFQQLQNKTNIILLGDSIGDLTMADGVPGVQNILKIGFLNDKVEERRERYMDSYDIVLEKDETLDVVNGLLRHILYQGDCVELQGS</sequence>
<dbReference type="EC" id="3.1.3.91" evidence="4"/>
<dbReference type="EC" id="3.1.3.5" evidence="4"/>
<dbReference type="EMBL" id="AK006972">
    <property type="protein sequence ID" value="BAB24814.1"/>
    <property type="status" value="ALT_FRAME"/>
    <property type="molecule type" value="mRNA"/>
</dbReference>
<dbReference type="EMBL" id="AK082816">
    <property type="protein sequence ID" value="BAC38632.1"/>
    <property type="status" value="ALT_INIT"/>
    <property type="molecule type" value="mRNA"/>
</dbReference>
<dbReference type="EMBL" id="AK148222">
    <property type="protein sequence ID" value="BAE28422.1"/>
    <property type="molecule type" value="mRNA"/>
</dbReference>
<dbReference type="EMBL" id="AK162770">
    <property type="protein sequence ID" value="BAE37053.1"/>
    <property type="status" value="ALT_INIT"/>
    <property type="molecule type" value="mRNA"/>
</dbReference>
<dbReference type="EMBL" id="AK166393">
    <property type="protein sequence ID" value="BAE38749.1"/>
    <property type="molecule type" value="mRNA"/>
</dbReference>
<dbReference type="EMBL" id="AL590968">
    <property type="protein sequence ID" value="CAM23034.1"/>
    <property type="status" value="ALT_SEQ"/>
    <property type="molecule type" value="Genomic_DNA"/>
</dbReference>
<dbReference type="EMBL" id="AL590968">
    <property type="protein sequence ID" value="CAM23035.1"/>
    <property type="molecule type" value="Genomic_DNA"/>
</dbReference>
<dbReference type="EMBL" id="AL590968">
    <property type="protein sequence ID" value="CAM23036.1"/>
    <property type="status" value="ALT_SEQ"/>
    <property type="molecule type" value="Genomic_DNA"/>
</dbReference>
<dbReference type="EMBL" id="BC015307">
    <property type="protein sequence ID" value="AAH15307.1"/>
    <property type="status" value="ALT_INIT"/>
    <property type="molecule type" value="mRNA"/>
</dbReference>
<dbReference type="CCDS" id="CCDS48930.1">
    <molecule id="Q3UFY7-2"/>
</dbReference>
<dbReference type="CCDS" id="CCDS48931.1">
    <molecule id="Q3UFY7-1"/>
</dbReference>
<dbReference type="CCDS" id="CCDS88254.1">
    <molecule id="Q3UFY7-4"/>
</dbReference>
<dbReference type="RefSeq" id="NP_001096120.1">
    <molecule id="Q3UFY7-1"/>
    <property type="nucleotide sequence ID" value="NM_001102650.2"/>
</dbReference>
<dbReference type="RefSeq" id="NP_001349895.1">
    <molecule id="Q3UFY7-4"/>
    <property type="nucleotide sequence ID" value="NM_001362966.1"/>
</dbReference>
<dbReference type="RefSeq" id="NP_001349897.1">
    <molecule id="Q3UFY7-3"/>
    <property type="nucleotide sequence ID" value="NM_001362968.1"/>
</dbReference>
<dbReference type="RefSeq" id="NP_080837.3">
    <molecule id="Q3UFY7-2"/>
    <property type="nucleotide sequence ID" value="NM_026561.4"/>
</dbReference>
<dbReference type="RefSeq" id="XP_006534106.1">
    <property type="nucleotide sequence ID" value="XM_006534043.3"/>
</dbReference>
<dbReference type="RefSeq" id="XP_030102118.1">
    <molecule id="Q3UFY7-1"/>
    <property type="nucleotide sequence ID" value="XM_030246258.1"/>
</dbReference>
<dbReference type="SMR" id="Q3UFY7"/>
<dbReference type="BioGRID" id="212658">
    <property type="interactions" value="8"/>
</dbReference>
<dbReference type="FunCoup" id="Q3UFY7">
    <property type="interactions" value="955"/>
</dbReference>
<dbReference type="STRING" id="10090.ENSMUSP00000090360"/>
<dbReference type="PhosphoSitePlus" id="Q3UFY7"/>
<dbReference type="SwissPalm" id="Q3UFY7"/>
<dbReference type="jPOST" id="Q3UFY7"/>
<dbReference type="PaxDb" id="10090-ENSMUSP00000090360"/>
<dbReference type="PeptideAtlas" id="Q3UFY7"/>
<dbReference type="ProteomicsDB" id="296454">
    <molecule id="Q3UFY7-1"/>
</dbReference>
<dbReference type="ProteomicsDB" id="296455">
    <molecule id="Q3UFY7-2"/>
</dbReference>
<dbReference type="ProteomicsDB" id="296456">
    <molecule id="Q3UFY7-3"/>
</dbReference>
<dbReference type="ProteomicsDB" id="296457">
    <molecule id="Q3UFY7-4"/>
</dbReference>
<dbReference type="Pumba" id="Q3UFY7"/>
<dbReference type="Antibodypedia" id="28986">
    <property type="antibodies" value="73 antibodies from 17 providers"/>
</dbReference>
<dbReference type="DNASU" id="68106"/>
<dbReference type="Ensembl" id="ENSMUST00000092688.12">
    <molecule id="Q3UFY7-1"/>
    <property type="protein sequence ID" value="ENSMUSP00000090360.6"/>
    <property type="gene ID" value="ENSMUSG00000017176.18"/>
</dbReference>
<dbReference type="Ensembl" id="ENSMUST00000107397.2">
    <molecule id="Q3UFY7-4"/>
    <property type="protein sequence ID" value="ENSMUSP00000103020.2"/>
    <property type="gene ID" value="ENSMUSG00000017176.18"/>
</dbReference>
<dbReference type="Ensembl" id="ENSMUST00000107398.8">
    <molecule id="Q3UFY7-2"/>
    <property type="protein sequence ID" value="ENSMUSP00000103021.2"/>
    <property type="gene ID" value="ENSMUSG00000017176.18"/>
</dbReference>
<dbReference type="Ensembl" id="ENSMUST00000107399.9">
    <molecule id="Q3UFY7-2"/>
    <property type="protein sequence ID" value="ENSMUSP00000103022.3"/>
    <property type="gene ID" value="ENSMUSG00000017176.18"/>
</dbReference>
<dbReference type="GeneID" id="68106"/>
<dbReference type="KEGG" id="mmu:68106"/>
<dbReference type="UCSC" id="uc007llc.1">
    <molecule id="Q3UFY7-2"/>
    <property type="organism name" value="mouse"/>
</dbReference>
<dbReference type="UCSC" id="uc007lld.2">
    <molecule id="Q3UFY7-1"/>
    <property type="organism name" value="mouse"/>
</dbReference>
<dbReference type="UCSC" id="uc007llg.1">
    <molecule id="Q3UFY7-3"/>
    <property type="organism name" value="mouse"/>
</dbReference>
<dbReference type="AGR" id="MGI:1915356"/>
<dbReference type="CTD" id="115024"/>
<dbReference type="MGI" id="MGI:1915356">
    <property type="gene designation" value="Nt5c3b"/>
</dbReference>
<dbReference type="VEuPathDB" id="HostDB:ENSMUSG00000017176"/>
<dbReference type="eggNOG" id="KOG3128">
    <property type="taxonomic scope" value="Eukaryota"/>
</dbReference>
<dbReference type="GeneTree" id="ENSGT00390000012959"/>
<dbReference type="HOGENOM" id="CLU_048584_0_2_1"/>
<dbReference type="InParanoid" id="Q3UFY7"/>
<dbReference type="OMA" id="THFISNM"/>
<dbReference type="OrthoDB" id="10014216at2759"/>
<dbReference type="PhylomeDB" id="Q3UFY7"/>
<dbReference type="TreeFam" id="TF314663"/>
<dbReference type="Reactome" id="R-MMU-429958">
    <property type="pathway name" value="mRNA decay by 3' to 5' exoribonuclease"/>
</dbReference>
<dbReference type="BioGRID-ORCS" id="68106">
    <property type="hits" value="2 hits in 76 CRISPR screens"/>
</dbReference>
<dbReference type="ChiTaRS" id="Nt5c3b">
    <property type="organism name" value="mouse"/>
</dbReference>
<dbReference type="PRO" id="PR:Q3UFY7"/>
<dbReference type="Proteomes" id="UP000000589">
    <property type="component" value="Chromosome 11"/>
</dbReference>
<dbReference type="RNAct" id="Q3UFY7">
    <property type="molecule type" value="protein"/>
</dbReference>
<dbReference type="Bgee" id="ENSMUSG00000017176">
    <property type="expression patterns" value="Expressed in blastoderm cell in morula and 251 other cell types or tissues"/>
</dbReference>
<dbReference type="ExpressionAtlas" id="Q3UFY7">
    <property type="expression patterns" value="baseline and differential"/>
</dbReference>
<dbReference type="GO" id="GO:0005737">
    <property type="term" value="C:cytoplasm"/>
    <property type="evidence" value="ECO:0007669"/>
    <property type="project" value="UniProtKB-SubCell"/>
</dbReference>
<dbReference type="GO" id="GO:0008253">
    <property type="term" value="F:5'-nucleotidase activity"/>
    <property type="evidence" value="ECO:0007669"/>
    <property type="project" value="UniProtKB-EC"/>
</dbReference>
<dbReference type="GO" id="GO:0000287">
    <property type="term" value="F:magnesium ion binding"/>
    <property type="evidence" value="ECO:0007669"/>
    <property type="project" value="InterPro"/>
</dbReference>
<dbReference type="GO" id="GO:0000166">
    <property type="term" value="F:nucleotide binding"/>
    <property type="evidence" value="ECO:0007669"/>
    <property type="project" value="UniProtKB-KW"/>
</dbReference>
<dbReference type="GO" id="GO:0009117">
    <property type="term" value="P:nucleotide metabolic process"/>
    <property type="evidence" value="ECO:0007669"/>
    <property type="project" value="UniProtKB-KW"/>
</dbReference>
<dbReference type="CDD" id="cd07504">
    <property type="entry name" value="HAD_5NT"/>
    <property type="match status" value="1"/>
</dbReference>
<dbReference type="FunFam" id="1.10.150.340:FF:000001">
    <property type="entry name" value="Cytosolic 5-nucleotidase 3-like"/>
    <property type="match status" value="1"/>
</dbReference>
<dbReference type="FunFam" id="3.40.50.1000:FF:000032">
    <property type="entry name" value="Cytosolic 5-nucleotidase 3-like"/>
    <property type="match status" value="1"/>
</dbReference>
<dbReference type="Gene3D" id="3.40.50.1000">
    <property type="entry name" value="HAD superfamily/HAD-like"/>
    <property type="match status" value="1"/>
</dbReference>
<dbReference type="Gene3D" id="1.10.150.340">
    <property type="entry name" value="Pyrimidine 5'-nucleotidase (UMPH-1), N-terminal domain"/>
    <property type="match status" value="1"/>
</dbReference>
<dbReference type="InterPro" id="IPR036412">
    <property type="entry name" value="HAD-like_sf"/>
</dbReference>
<dbReference type="InterPro" id="IPR023214">
    <property type="entry name" value="HAD_sf"/>
</dbReference>
<dbReference type="InterPro" id="IPR006434">
    <property type="entry name" value="Pyrimidine_nucleotidase_eu"/>
</dbReference>
<dbReference type="NCBIfam" id="TIGR01544">
    <property type="entry name" value="HAD-SF-IE"/>
    <property type="match status" value="1"/>
</dbReference>
<dbReference type="PANTHER" id="PTHR13045">
    <property type="entry name" value="5'-NUCLEOTIDASE"/>
    <property type="match status" value="1"/>
</dbReference>
<dbReference type="PANTHER" id="PTHR13045:SF15">
    <property type="entry name" value="7-METHYLGUANOSINE PHOSPHATE-SPECIFIC 5'-NUCLEOTIDASE"/>
    <property type="match status" value="1"/>
</dbReference>
<dbReference type="Pfam" id="PF05822">
    <property type="entry name" value="UMPH-1"/>
    <property type="match status" value="1"/>
</dbReference>
<dbReference type="SFLD" id="SFLDG01128">
    <property type="entry name" value="C1.4:_5'-Nucleotidase_Like"/>
    <property type="match status" value="1"/>
</dbReference>
<dbReference type="SFLD" id="SFLDS00003">
    <property type="entry name" value="Haloacid_Dehalogenase"/>
    <property type="match status" value="1"/>
</dbReference>
<dbReference type="SUPFAM" id="SSF56784">
    <property type="entry name" value="HAD-like"/>
    <property type="match status" value="1"/>
</dbReference>
<name>5NT3B_MOUSE</name>
<reference key="1">
    <citation type="journal article" date="2005" name="Science">
        <title>The transcriptional landscape of the mammalian genome.</title>
        <authorList>
            <person name="Carninci P."/>
            <person name="Kasukawa T."/>
            <person name="Katayama S."/>
            <person name="Gough J."/>
            <person name="Frith M.C."/>
            <person name="Maeda N."/>
            <person name="Oyama R."/>
            <person name="Ravasi T."/>
            <person name="Lenhard B."/>
            <person name="Wells C."/>
            <person name="Kodzius R."/>
            <person name="Shimokawa K."/>
            <person name="Bajic V.B."/>
            <person name="Brenner S.E."/>
            <person name="Batalov S."/>
            <person name="Forrest A.R."/>
            <person name="Zavolan M."/>
            <person name="Davis M.J."/>
            <person name="Wilming L.G."/>
            <person name="Aidinis V."/>
            <person name="Allen J.E."/>
            <person name="Ambesi-Impiombato A."/>
            <person name="Apweiler R."/>
            <person name="Aturaliya R.N."/>
            <person name="Bailey T.L."/>
            <person name="Bansal M."/>
            <person name="Baxter L."/>
            <person name="Beisel K.W."/>
            <person name="Bersano T."/>
            <person name="Bono H."/>
            <person name="Chalk A.M."/>
            <person name="Chiu K.P."/>
            <person name="Choudhary V."/>
            <person name="Christoffels A."/>
            <person name="Clutterbuck D.R."/>
            <person name="Crowe M.L."/>
            <person name="Dalla E."/>
            <person name="Dalrymple B.P."/>
            <person name="de Bono B."/>
            <person name="Della Gatta G."/>
            <person name="di Bernardo D."/>
            <person name="Down T."/>
            <person name="Engstrom P."/>
            <person name="Fagiolini M."/>
            <person name="Faulkner G."/>
            <person name="Fletcher C.F."/>
            <person name="Fukushima T."/>
            <person name="Furuno M."/>
            <person name="Futaki S."/>
            <person name="Gariboldi M."/>
            <person name="Georgii-Hemming P."/>
            <person name="Gingeras T.R."/>
            <person name="Gojobori T."/>
            <person name="Green R.E."/>
            <person name="Gustincich S."/>
            <person name="Harbers M."/>
            <person name="Hayashi Y."/>
            <person name="Hensch T.K."/>
            <person name="Hirokawa N."/>
            <person name="Hill D."/>
            <person name="Huminiecki L."/>
            <person name="Iacono M."/>
            <person name="Ikeo K."/>
            <person name="Iwama A."/>
            <person name="Ishikawa T."/>
            <person name="Jakt M."/>
            <person name="Kanapin A."/>
            <person name="Katoh M."/>
            <person name="Kawasawa Y."/>
            <person name="Kelso J."/>
            <person name="Kitamura H."/>
            <person name="Kitano H."/>
            <person name="Kollias G."/>
            <person name="Krishnan S.P."/>
            <person name="Kruger A."/>
            <person name="Kummerfeld S.K."/>
            <person name="Kurochkin I.V."/>
            <person name="Lareau L.F."/>
            <person name="Lazarevic D."/>
            <person name="Lipovich L."/>
            <person name="Liu J."/>
            <person name="Liuni S."/>
            <person name="McWilliam S."/>
            <person name="Madan Babu M."/>
            <person name="Madera M."/>
            <person name="Marchionni L."/>
            <person name="Matsuda H."/>
            <person name="Matsuzawa S."/>
            <person name="Miki H."/>
            <person name="Mignone F."/>
            <person name="Miyake S."/>
            <person name="Morris K."/>
            <person name="Mottagui-Tabar S."/>
            <person name="Mulder N."/>
            <person name="Nakano N."/>
            <person name="Nakauchi H."/>
            <person name="Ng P."/>
            <person name="Nilsson R."/>
            <person name="Nishiguchi S."/>
            <person name="Nishikawa S."/>
            <person name="Nori F."/>
            <person name="Ohara O."/>
            <person name="Okazaki Y."/>
            <person name="Orlando V."/>
            <person name="Pang K.C."/>
            <person name="Pavan W.J."/>
            <person name="Pavesi G."/>
            <person name="Pesole G."/>
            <person name="Petrovsky N."/>
            <person name="Piazza S."/>
            <person name="Reed J."/>
            <person name="Reid J.F."/>
            <person name="Ring B.Z."/>
            <person name="Ringwald M."/>
            <person name="Rost B."/>
            <person name="Ruan Y."/>
            <person name="Salzberg S.L."/>
            <person name="Sandelin A."/>
            <person name="Schneider C."/>
            <person name="Schoenbach C."/>
            <person name="Sekiguchi K."/>
            <person name="Semple C.A."/>
            <person name="Seno S."/>
            <person name="Sessa L."/>
            <person name="Sheng Y."/>
            <person name="Shibata Y."/>
            <person name="Shimada H."/>
            <person name="Shimada K."/>
            <person name="Silva D."/>
            <person name="Sinclair B."/>
            <person name="Sperling S."/>
            <person name="Stupka E."/>
            <person name="Sugiura K."/>
            <person name="Sultana R."/>
            <person name="Takenaka Y."/>
            <person name="Taki K."/>
            <person name="Tammoja K."/>
            <person name="Tan S.L."/>
            <person name="Tang S."/>
            <person name="Taylor M.S."/>
            <person name="Tegner J."/>
            <person name="Teichmann S.A."/>
            <person name="Ueda H.R."/>
            <person name="van Nimwegen E."/>
            <person name="Verardo R."/>
            <person name="Wei C.L."/>
            <person name="Yagi K."/>
            <person name="Yamanishi H."/>
            <person name="Zabarovsky E."/>
            <person name="Zhu S."/>
            <person name="Zimmer A."/>
            <person name="Hide W."/>
            <person name="Bult C."/>
            <person name="Grimmond S.M."/>
            <person name="Teasdale R.D."/>
            <person name="Liu E.T."/>
            <person name="Brusic V."/>
            <person name="Quackenbush J."/>
            <person name="Wahlestedt C."/>
            <person name="Mattick J.S."/>
            <person name="Hume D.A."/>
            <person name="Kai C."/>
            <person name="Sasaki D."/>
            <person name="Tomaru Y."/>
            <person name="Fukuda S."/>
            <person name="Kanamori-Katayama M."/>
            <person name="Suzuki M."/>
            <person name="Aoki J."/>
            <person name="Arakawa T."/>
            <person name="Iida J."/>
            <person name="Imamura K."/>
            <person name="Itoh M."/>
            <person name="Kato T."/>
            <person name="Kawaji H."/>
            <person name="Kawagashira N."/>
            <person name="Kawashima T."/>
            <person name="Kojima M."/>
            <person name="Kondo S."/>
            <person name="Konno H."/>
            <person name="Nakano K."/>
            <person name="Ninomiya N."/>
            <person name="Nishio T."/>
            <person name="Okada M."/>
            <person name="Plessy C."/>
            <person name="Shibata K."/>
            <person name="Shiraki T."/>
            <person name="Suzuki S."/>
            <person name="Tagami M."/>
            <person name="Waki K."/>
            <person name="Watahiki A."/>
            <person name="Okamura-Oho Y."/>
            <person name="Suzuki H."/>
            <person name="Kawai J."/>
            <person name="Hayashizaki Y."/>
        </authorList>
    </citation>
    <scope>NUCLEOTIDE SEQUENCE [LARGE SCALE MRNA] (ISOFORMS 1; 2; 3 AND 4)</scope>
    <source>
        <strain>C57BL/6J</strain>
        <tissue>Testis</tissue>
        <tissue>Thymus</tissue>
    </source>
</reference>
<reference key="2">
    <citation type="journal article" date="2009" name="PLoS Biol.">
        <title>Lineage-specific biology revealed by a finished genome assembly of the mouse.</title>
        <authorList>
            <person name="Church D.M."/>
            <person name="Goodstadt L."/>
            <person name="Hillier L.W."/>
            <person name="Zody M.C."/>
            <person name="Goldstein S."/>
            <person name="She X."/>
            <person name="Bult C.J."/>
            <person name="Agarwala R."/>
            <person name="Cherry J.L."/>
            <person name="DiCuccio M."/>
            <person name="Hlavina W."/>
            <person name="Kapustin Y."/>
            <person name="Meric P."/>
            <person name="Maglott D."/>
            <person name="Birtle Z."/>
            <person name="Marques A.C."/>
            <person name="Graves T."/>
            <person name="Zhou S."/>
            <person name="Teague B."/>
            <person name="Potamousis K."/>
            <person name="Churas C."/>
            <person name="Place M."/>
            <person name="Herschleb J."/>
            <person name="Runnheim R."/>
            <person name="Forrest D."/>
            <person name="Amos-Landgraf J."/>
            <person name="Schwartz D.C."/>
            <person name="Cheng Z."/>
            <person name="Lindblad-Toh K."/>
            <person name="Eichler E.E."/>
            <person name="Ponting C.P."/>
        </authorList>
    </citation>
    <scope>NUCLEOTIDE SEQUENCE [LARGE SCALE GENOMIC DNA]</scope>
    <source>
        <strain>C57BL/6J</strain>
    </source>
</reference>
<reference key="3">
    <citation type="journal article" date="2004" name="Genome Res.">
        <title>The status, quality, and expansion of the NIH full-length cDNA project: the Mammalian Gene Collection (MGC).</title>
        <authorList>
            <consortium name="The MGC Project Team"/>
        </authorList>
    </citation>
    <scope>NUCLEOTIDE SEQUENCE [LARGE SCALE MRNA] OF 5-300 (ISOFORM 1)</scope>
    <source>
        <strain>FVB/N</strain>
        <tissue>Kidney</tissue>
    </source>
</reference>
<reference key="4">
    <citation type="journal article" date="2010" name="Cell">
        <title>A tissue-specific atlas of mouse protein phosphorylation and expression.</title>
        <authorList>
            <person name="Huttlin E.L."/>
            <person name="Jedrychowski M.P."/>
            <person name="Elias J.E."/>
            <person name="Goswami T."/>
            <person name="Rad R."/>
            <person name="Beausoleil S.A."/>
            <person name="Villen J."/>
            <person name="Haas W."/>
            <person name="Sowa M.E."/>
            <person name="Gygi S.P."/>
        </authorList>
    </citation>
    <scope>IDENTIFICATION BY MASS SPECTROMETRY [LARGE SCALE ANALYSIS]</scope>
    <source>
        <tissue>Brain</tissue>
        <tissue>Heart</tissue>
        <tissue>Kidney</tissue>
        <tissue>Liver</tissue>
        <tissue>Lung</tissue>
        <tissue>Pancreas</tissue>
        <tissue>Spleen</tissue>
        <tissue>Testis</tissue>
    </source>
</reference>
<evidence type="ECO:0000250" key="1"/>
<evidence type="ECO:0000250" key="2">
    <source>
        <dbReference type="UniProtKB" id="Q969T7"/>
    </source>
</evidence>
<evidence type="ECO:0000250" key="3">
    <source>
        <dbReference type="UniProtKB" id="Q9H0P0"/>
    </source>
</evidence>
<evidence type="ECO:0000250" key="4">
    <source>
        <dbReference type="UniProtKB" id="Q9W197"/>
    </source>
</evidence>
<evidence type="ECO:0000303" key="5">
    <source>
    </source>
</evidence>
<evidence type="ECO:0000305" key="6"/>